<sequence>MKPSMAILLVIALIIFSLDKSYSANDKPIGKCGDAKRNKPCLACSHRSSIADFYSKCCTYDAVYNGCLDKLRH</sequence>
<evidence type="ECO:0000250" key="1"/>
<evidence type="ECO:0000250" key="2">
    <source>
        <dbReference type="UniProtKB" id="I6RU32"/>
    </source>
</evidence>
<evidence type="ECO:0000255" key="3"/>
<evidence type="ECO:0000303" key="4">
    <source>
    </source>
</evidence>
<evidence type="ECO:0000305" key="5"/>
<evidence type="ECO:0000305" key="6">
    <source>
    </source>
</evidence>
<keyword id="KW-1015">Disulfide bond</keyword>
<keyword id="KW-0872">Ion channel impairing toxin</keyword>
<keyword id="KW-0528">Neurotoxin</keyword>
<keyword id="KW-0632">Potassium channel impairing toxin</keyword>
<keyword id="KW-0964">Secreted</keyword>
<keyword id="KW-0732">Signal</keyword>
<keyword id="KW-0800">Toxin</keyword>
<keyword id="KW-1220">Voltage-gated potassium channel impairing toxin</keyword>
<comment type="function">
    <text evidence="1">Inhibits voltage-gated potassium channels.</text>
</comment>
<comment type="subcellular location">
    <subcellularLocation>
        <location evidence="6">Secreted</location>
    </subcellularLocation>
</comment>
<comment type="tissue specificity">
    <text evidence="6">Expressed by the venom gland.</text>
</comment>
<comment type="PTM">
    <text evidence="5">Contains 3 disulfide bonds.</text>
</comment>
<feature type="signal peptide" evidence="3">
    <location>
        <begin position="1"/>
        <end position="23"/>
    </location>
</feature>
<feature type="chain" id="PRO_0000425470" description="Kappa-scoloptoxin(03)-Ssm1b" evidence="2">
    <location>
        <begin position="24"/>
        <end position="73"/>
    </location>
</feature>
<feature type="disulfide bond" evidence="2">
    <location>
        <begin position="32"/>
        <end position="58"/>
    </location>
</feature>
<feature type="disulfide bond" evidence="2">
    <location>
        <begin position="41"/>
        <end position="57"/>
    </location>
</feature>
<feature type="disulfide bond" evidence="2">
    <location>
        <begin position="44"/>
        <end position="67"/>
    </location>
</feature>
<organism>
    <name type="scientific">Scolopendra mutilans</name>
    <name type="common">Chinese red-headed centipede</name>
    <name type="synonym">Scolopendra subspinipes mutilans</name>
    <dbReference type="NCBI Taxonomy" id="2836329"/>
    <lineage>
        <taxon>Eukaryota</taxon>
        <taxon>Metazoa</taxon>
        <taxon>Ecdysozoa</taxon>
        <taxon>Arthropoda</taxon>
        <taxon>Myriapoda</taxon>
        <taxon>Chilopoda</taxon>
        <taxon>Pleurostigmophora</taxon>
        <taxon>Scolopendromorpha</taxon>
        <taxon>Scolopendridae</taxon>
        <taxon>Scolopendra</taxon>
    </lineage>
</organism>
<proteinExistence type="inferred from homology"/>
<name>TX31B_SCOMU</name>
<protein>
    <recommendedName>
        <fullName evidence="5">Kappa-scoloptoxin(03)-Ssm1b</fullName>
        <shortName evidence="5">Kappa-SLPTX(03)-Ssm1b</shortName>
    </recommendedName>
    <alternativeName>
        <fullName evidence="4">Kappa-scoloptoxin-Ssm1b</fullName>
        <shortName evidence="4">Kappa-SLPTX-Ssm1b</shortName>
    </alternativeName>
</protein>
<accession>I6R1R9</accession>
<reference key="1">
    <citation type="journal article" date="2012" name="Mol. Cell. Proteomics">
        <title>Chemical punch packed in venoms makes centipedes excellent predators.</title>
        <authorList>
            <person name="Yang S."/>
            <person name="Liu Z."/>
            <person name="Xiao Y."/>
            <person name="Li Y."/>
            <person name="Rong M."/>
            <person name="Liang S."/>
            <person name="Zhang Z."/>
            <person name="Yu H."/>
            <person name="King G.F."/>
            <person name="Lai R."/>
        </authorList>
    </citation>
    <scope>NUCLEOTIDE SEQUENCE [MRNA]</scope>
    <source>
        <tissue>Venom gland</tissue>
    </source>
</reference>
<dbReference type="EMBL" id="JQ757069">
    <property type="protein sequence ID" value="AFM55016.1"/>
    <property type="molecule type" value="mRNA"/>
</dbReference>
<dbReference type="SMR" id="I6R1R9"/>
<dbReference type="GO" id="GO:0005576">
    <property type="term" value="C:extracellular region"/>
    <property type="evidence" value="ECO:0007669"/>
    <property type="project" value="UniProtKB-SubCell"/>
</dbReference>
<dbReference type="GO" id="GO:0015459">
    <property type="term" value="F:potassium channel regulator activity"/>
    <property type="evidence" value="ECO:0007669"/>
    <property type="project" value="UniProtKB-KW"/>
</dbReference>
<dbReference type="GO" id="GO:0090729">
    <property type="term" value="F:toxin activity"/>
    <property type="evidence" value="ECO:0007669"/>
    <property type="project" value="UniProtKB-KW"/>
</dbReference>
<dbReference type="Gene3D" id="1.10.60.50">
    <property type="match status" value="1"/>
</dbReference>